<comment type="function">
    <text evidence="1">Catalyzes a salvage reaction resulting in the formation of AMP, that is energically less costly than de novo synthesis.</text>
</comment>
<comment type="catalytic activity">
    <reaction evidence="1">
        <text>AMP + diphosphate = 5-phospho-alpha-D-ribose 1-diphosphate + adenine</text>
        <dbReference type="Rhea" id="RHEA:16609"/>
        <dbReference type="ChEBI" id="CHEBI:16708"/>
        <dbReference type="ChEBI" id="CHEBI:33019"/>
        <dbReference type="ChEBI" id="CHEBI:58017"/>
        <dbReference type="ChEBI" id="CHEBI:456215"/>
        <dbReference type="EC" id="2.4.2.7"/>
    </reaction>
</comment>
<comment type="pathway">
    <text evidence="1">Purine metabolism; AMP biosynthesis via salvage pathway; AMP from adenine: step 1/1.</text>
</comment>
<comment type="subunit">
    <text evidence="1">Homodimer.</text>
</comment>
<comment type="subcellular location">
    <subcellularLocation>
        <location evidence="1">Cytoplasm</location>
    </subcellularLocation>
</comment>
<comment type="similarity">
    <text evidence="1">Belongs to the purine/pyrimidine phosphoribosyltransferase family.</text>
</comment>
<evidence type="ECO:0000255" key="1">
    <source>
        <dbReference type="HAMAP-Rule" id="MF_00004"/>
    </source>
</evidence>
<reference key="1">
    <citation type="submission" date="2007-04" db="EMBL/GenBank/DDBJ databases">
        <title>Complete sequence of Roseiflexus sp. RS-1.</title>
        <authorList>
            <consortium name="US DOE Joint Genome Institute"/>
            <person name="Copeland A."/>
            <person name="Lucas S."/>
            <person name="Lapidus A."/>
            <person name="Barry K."/>
            <person name="Detter J.C."/>
            <person name="Glavina del Rio T."/>
            <person name="Hammon N."/>
            <person name="Israni S."/>
            <person name="Dalin E."/>
            <person name="Tice H."/>
            <person name="Pitluck S."/>
            <person name="Chertkov O."/>
            <person name="Brettin T."/>
            <person name="Bruce D."/>
            <person name="Han C."/>
            <person name="Schmutz J."/>
            <person name="Larimer F."/>
            <person name="Land M."/>
            <person name="Hauser L."/>
            <person name="Kyrpides N."/>
            <person name="Mikhailova N."/>
            <person name="Bryant D.A."/>
            <person name="Richardson P."/>
        </authorList>
    </citation>
    <scope>NUCLEOTIDE SEQUENCE [LARGE SCALE GENOMIC DNA]</scope>
    <source>
        <strain>RS-1</strain>
    </source>
</reference>
<keyword id="KW-0963">Cytoplasm</keyword>
<keyword id="KW-0328">Glycosyltransferase</keyword>
<keyword id="KW-0660">Purine salvage</keyword>
<keyword id="KW-0808">Transferase</keyword>
<organism>
    <name type="scientific">Roseiflexus sp. (strain RS-1)</name>
    <dbReference type="NCBI Taxonomy" id="357808"/>
    <lineage>
        <taxon>Bacteria</taxon>
        <taxon>Bacillati</taxon>
        <taxon>Chloroflexota</taxon>
        <taxon>Chloroflexia</taxon>
        <taxon>Chloroflexales</taxon>
        <taxon>Roseiflexineae</taxon>
        <taxon>Roseiflexaceae</taxon>
        <taxon>Roseiflexus</taxon>
    </lineage>
</organism>
<proteinExistence type="inferred from homology"/>
<feature type="chain" id="PRO_0000329371" description="Adenine phosphoribosyltransferase">
    <location>
        <begin position="1"/>
        <end position="172"/>
    </location>
</feature>
<sequence>MTTNLADLIRNIPDFPIPGIQFKDITPLLQNGAAFKEVIDTLAARYEGRALDAIVGIESRGFIFSAPLAYRLGVGMIPIRKPGKLPWETFAVEYDLEYGTNKLEMHRDALAPGARVVVIDDVLATGGTVAAACQMVEMAGAVVEEVAFLIELTFLKGRERLAKYPFFSMIQY</sequence>
<dbReference type="EC" id="2.4.2.7" evidence="1"/>
<dbReference type="EMBL" id="CP000686">
    <property type="protein sequence ID" value="ABQ89157.1"/>
    <property type="molecule type" value="Genomic_DNA"/>
</dbReference>
<dbReference type="RefSeq" id="WP_011955512.1">
    <property type="nucleotide sequence ID" value="NC_009523.1"/>
</dbReference>
<dbReference type="SMR" id="A5URA4"/>
<dbReference type="STRING" id="357808.RoseRS_0741"/>
<dbReference type="KEGG" id="rrs:RoseRS_0741"/>
<dbReference type="eggNOG" id="COG0503">
    <property type="taxonomic scope" value="Bacteria"/>
</dbReference>
<dbReference type="HOGENOM" id="CLU_063339_3_3_0"/>
<dbReference type="OrthoDB" id="9803963at2"/>
<dbReference type="UniPathway" id="UPA00588">
    <property type="reaction ID" value="UER00646"/>
</dbReference>
<dbReference type="Proteomes" id="UP000006554">
    <property type="component" value="Chromosome"/>
</dbReference>
<dbReference type="GO" id="GO:0005737">
    <property type="term" value="C:cytoplasm"/>
    <property type="evidence" value="ECO:0007669"/>
    <property type="project" value="UniProtKB-SubCell"/>
</dbReference>
<dbReference type="GO" id="GO:0002055">
    <property type="term" value="F:adenine binding"/>
    <property type="evidence" value="ECO:0007669"/>
    <property type="project" value="TreeGrafter"/>
</dbReference>
<dbReference type="GO" id="GO:0003999">
    <property type="term" value="F:adenine phosphoribosyltransferase activity"/>
    <property type="evidence" value="ECO:0007669"/>
    <property type="project" value="UniProtKB-UniRule"/>
</dbReference>
<dbReference type="GO" id="GO:0016208">
    <property type="term" value="F:AMP binding"/>
    <property type="evidence" value="ECO:0007669"/>
    <property type="project" value="TreeGrafter"/>
</dbReference>
<dbReference type="GO" id="GO:0006168">
    <property type="term" value="P:adenine salvage"/>
    <property type="evidence" value="ECO:0007669"/>
    <property type="project" value="InterPro"/>
</dbReference>
<dbReference type="GO" id="GO:0044209">
    <property type="term" value="P:AMP salvage"/>
    <property type="evidence" value="ECO:0007669"/>
    <property type="project" value="UniProtKB-UniRule"/>
</dbReference>
<dbReference type="GO" id="GO:0006166">
    <property type="term" value="P:purine ribonucleoside salvage"/>
    <property type="evidence" value="ECO:0007669"/>
    <property type="project" value="UniProtKB-KW"/>
</dbReference>
<dbReference type="CDD" id="cd06223">
    <property type="entry name" value="PRTases_typeI"/>
    <property type="match status" value="1"/>
</dbReference>
<dbReference type="FunFam" id="3.40.50.2020:FF:000004">
    <property type="entry name" value="Adenine phosphoribosyltransferase"/>
    <property type="match status" value="1"/>
</dbReference>
<dbReference type="Gene3D" id="3.40.50.2020">
    <property type="match status" value="1"/>
</dbReference>
<dbReference type="HAMAP" id="MF_00004">
    <property type="entry name" value="Aden_phosphoribosyltr"/>
    <property type="match status" value="1"/>
</dbReference>
<dbReference type="InterPro" id="IPR005764">
    <property type="entry name" value="Ade_phspho_trans"/>
</dbReference>
<dbReference type="InterPro" id="IPR000836">
    <property type="entry name" value="PRibTrfase_dom"/>
</dbReference>
<dbReference type="InterPro" id="IPR029057">
    <property type="entry name" value="PRTase-like"/>
</dbReference>
<dbReference type="InterPro" id="IPR050054">
    <property type="entry name" value="UPRTase/APRTase"/>
</dbReference>
<dbReference type="NCBIfam" id="TIGR01090">
    <property type="entry name" value="apt"/>
    <property type="match status" value="1"/>
</dbReference>
<dbReference type="NCBIfam" id="NF002634">
    <property type="entry name" value="PRK02304.1-3"/>
    <property type="match status" value="1"/>
</dbReference>
<dbReference type="NCBIfam" id="NF002636">
    <property type="entry name" value="PRK02304.1-5"/>
    <property type="match status" value="1"/>
</dbReference>
<dbReference type="PANTHER" id="PTHR32315">
    <property type="entry name" value="ADENINE PHOSPHORIBOSYLTRANSFERASE"/>
    <property type="match status" value="1"/>
</dbReference>
<dbReference type="PANTHER" id="PTHR32315:SF3">
    <property type="entry name" value="ADENINE PHOSPHORIBOSYLTRANSFERASE"/>
    <property type="match status" value="1"/>
</dbReference>
<dbReference type="Pfam" id="PF00156">
    <property type="entry name" value="Pribosyltran"/>
    <property type="match status" value="1"/>
</dbReference>
<dbReference type="SUPFAM" id="SSF53271">
    <property type="entry name" value="PRTase-like"/>
    <property type="match status" value="1"/>
</dbReference>
<dbReference type="PROSITE" id="PS00103">
    <property type="entry name" value="PUR_PYR_PR_TRANSFER"/>
    <property type="match status" value="1"/>
</dbReference>
<accession>A5URA4</accession>
<name>APT_ROSS1</name>
<protein>
    <recommendedName>
        <fullName evidence="1">Adenine phosphoribosyltransferase</fullName>
        <shortName evidence="1">APRT</shortName>
        <ecNumber evidence="1">2.4.2.7</ecNumber>
    </recommendedName>
</protein>
<gene>
    <name evidence="1" type="primary">apt</name>
    <name type="ordered locus">RoseRS_0741</name>
</gene>